<keyword id="KW-0028">Amino-acid biosynthesis</keyword>
<keyword id="KW-0963">Cytoplasm</keyword>
<keyword id="KW-0220">Diaminopimelate biosynthesis</keyword>
<keyword id="KW-0456">Lyase</keyword>
<keyword id="KW-0457">Lysine biosynthesis</keyword>
<keyword id="KW-1185">Reference proteome</keyword>
<keyword id="KW-0704">Schiff base</keyword>
<evidence type="ECO:0000255" key="1">
    <source>
        <dbReference type="HAMAP-Rule" id="MF_00418"/>
    </source>
</evidence>
<evidence type="ECO:0000305" key="2"/>
<dbReference type="EC" id="4.3.3.7" evidence="1"/>
<dbReference type="EMBL" id="AL939110">
    <property type="protein sequence ID" value="CAB46413.1"/>
    <property type="status" value="ALT_INIT"/>
    <property type="molecule type" value="Genomic_DNA"/>
</dbReference>
<dbReference type="PIR" id="T36926">
    <property type="entry name" value="T36926"/>
</dbReference>
<dbReference type="RefSeq" id="NP_626178.1">
    <property type="nucleotide sequence ID" value="NC_003888.3"/>
</dbReference>
<dbReference type="SMR" id="Q9X9W0"/>
<dbReference type="STRING" id="100226.gene:17759509"/>
<dbReference type="PaxDb" id="100226-SCO1912"/>
<dbReference type="KEGG" id="sco:SCO1912"/>
<dbReference type="PATRIC" id="fig|100226.15.peg.1938"/>
<dbReference type="eggNOG" id="COG0329">
    <property type="taxonomic scope" value="Bacteria"/>
</dbReference>
<dbReference type="HOGENOM" id="CLU_049343_7_1_11"/>
<dbReference type="InParanoid" id="Q9X9W0"/>
<dbReference type="OrthoDB" id="9782828at2"/>
<dbReference type="PhylomeDB" id="Q9X9W0"/>
<dbReference type="UniPathway" id="UPA00034">
    <property type="reaction ID" value="UER00017"/>
</dbReference>
<dbReference type="Proteomes" id="UP000001973">
    <property type="component" value="Chromosome"/>
</dbReference>
<dbReference type="GO" id="GO:0005829">
    <property type="term" value="C:cytosol"/>
    <property type="evidence" value="ECO:0000318"/>
    <property type="project" value="GO_Central"/>
</dbReference>
<dbReference type="GO" id="GO:0008840">
    <property type="term" value="F:4-hydroxy-tetrahydrodipicolinate synthase activity"/>
    <property type="evidence" value="ECO:0000318"/>
    <property type="project" value="GO_Central"/>
</dbReference>
<dbReference type="GO" id="GO:0019877">
    <property type="term" value="P:diaminopimelate biosynthetic process"/>
    <property type="evidence" value="ECO:0007669"/>
    <property type="project" value="UniProtKB-UniRule"/>
</dbReference>
<dbReference type="GO" id="GO:0009089">
    <property type="term" value="P:lysine biosynthetic process via diaminopimelate"/>
    <property type="evidence" value="ECO:0007669"/>
    <property type="project" value="UniProtKB-UniRule"/>
</dbReference>
<dbReference type="CDD" id="cd00950">
    <property type="entry name" value="DHDPS"/>
    <property type="match status" value="1"/>
</dbReference>
<dbReference type="Gene3D" id="3.20.20.70">
    <property type="entry name" value="Aldolase class I"/>
    <property type="match status" value="1"/>
</dbReference>
<dbReference type="HAMAP" id="MF_00418">
    <property type="entry name" value="DapA"/>
    <property type="match status" value="1"/>
</dbReference>
<dbReference type="InterPro" id="IPR013785">
    <property type="entry name" value="Aldolase_TIM"/>
</dbReference>
<dbReference type="InterPro" id="IPR005263">
    <property type="entry name" value="DapA"/>
</dbReference>
<dbReference type="InterPro" id="IPR002220">
    <property type="entry name" value="DapA-like"/>
</dbReference>
<dbReference type="InterPro" id="IPR020625">
    <property type="entry name" value="Schiff_base-form_aldolases_AS"/>
</dbReference>
<dbReference type="InterPro" id="IPR020624">
    <property type="entry name" value="Schiff_base-form_aldolases_CS"/>
</dbReference>
<dbReference type="NCBIfam" id="TIGR00674">
    <property type="entry name" value="dapA"/>
    <property type="match status" value="1"/>
</dbReference>
<dbReference type="PANTHER" id="PTHR12128:SF66">
    <property type="entry name" value="4-HYDROXY-2-OXOGLUTARATE ALDOLASE, MITOCHONDRIAL"/>
    <property type="match status" value="1"/>
</dbReference>
<dbReference type="PANTHER" id="PTHR12128">
    <property type="entry name" value="DIHYDRODIPICOLINATE SYNTHASE"/>
    <property type="match status" value="1"/>
</dbReference>
<dbReference type="Pfam" id="PF00701">
    <property type="entry name" value="DHDPS"/>
    <property type="match status" value="1"/>
</dbReference>
<dbReference type="PIRSF" id="PIRSF001365">
    <property type="entry name" value="DHDPS"/>
    <property type="match status" value="1"/>
</dbReference>
<dbReference type="PRINTS" id="PR00146">
    <property type="entry name" value="DHPICSNTHASE"/>
</dbReference>
<dbReference type="SMART" id="SM01130">
    <property type="entry name" value="DHDPS"/>
    <property type="match status" value="1"/>
</dbReference>
<dbReference type="SUPFAM" id="SSF51569">
    <property type="entry name" value="Aldolase"/>
    <property type="match status" value="1"/>
</dbReference>
<dbReference type="PROSITE" id="PS00665">
    <property type="entry name" value="DHDPS_1"/>
    <property type="match status" value="1"/>
</dbReference>
<dbReference type="PROSITE" id="PS00666">
    <property type="entry name" value="DHDPS_2"/>
    <property type="match status" value="1"/>
</dbReference>
<proteinExistence type="inferred from homology"/>
<protein>
    <recommendedName>
        <fullName evidence="1">4-hydroxy-tetrahydrodipicolinate synthase 1</fullName>
        <shortName evidence="1">HTPA synthase 1</shortName>
        <ecNumber evidence="1">4.3.3.7</ecNumber>
    </recommendedName>
</protein>
<name>DAPA1_STRCO</name>
<comment type="function">
    <text evidence="1">Catalyzes the condensation of (S)-aspartate-beta-semialdehyde [(S)-ASA] and pyruvate to 4-hydroxy-tetrahydrodipicolinate (HTPA).</text>
</comment>
<comment type="catalytic activity">
    <reaction evidence="1">
        <text>L-aspartate 4-semialdehyde + pyruvate = (2S,4S)-4-hydroxy-2,3,4,5-tetrahydrodipicolinate + H2O + H(+)</text>
        <dbReference type="Rhea" id="RHEA:34171"/>
        <dbReference type="ChEBI" id="CHEBI:15361"/>
        <dbReference type="ChEBI" id="CHEBI:15377"/>
        <dbReference type="ChEBI" id="CHEBI:15378"/>
        <dbReference type="ChEBI" id="CHEBI:67139"/>
        <dbReference type="ChEBI" id="CHEBI:537519"/>
        <dbReference type="EC" id="4.3.3.7"/>
    </reaction>
</comment>
<comment type="pathway">
    <text evidence="1">Amino-acid biosynthesis; L-lysine biosynthesis via DAP pathway; (S)-tetrahydrodipicolinate from L-aspartate: step 3/4.</text>
</comment>
<comment type="subunit">
    <text evidence="1">Homotetramer; dimer of dimers.</text>
</comment>
<comment type="subcellular location">
    <subcellularLocation>
        <location evidence="1">Cytoplasm</location>
    </subcellularLocation>
</comment>
<comment type="similarity">
    <text evidence="1">Belongs to the DapA family.</text>
</comment>
<comment type="caution">
    <text evidence="2">Was originally thought to be a dihydrodipicolinate synthase (DHDPS), catalyzing the condensation of (S)-aspartate-beta-semialdehyde [(S)-ASA] and pyruvate to dihydrodipicolinate (DHDP). However, it was shown in E.coli that the product of the enzymatic reaction is not dihydrodipicolinate but in fact (4S)-4-hydroxy-2,3,4,5-tetrahydro-(2S)-dipicolinic acid (HTPA), and that the consecutive dehydration reaction leading to DHDP is not spontaneous but catalyzed by DapB.</text>
</comment>
<comment type="sequence caution" evidence="2">
    <conflict type="erroneous initiation">
        <sequence resource="EMBL-CDS" id="CAB46413"/>
    </conflict>
</comment>
<organism>
    <name type="scientific">Streptomyces coelicolor (strain ATCC BAA-471 / A3(2) / M145)</name>
    <dbReference type="NCBI Taxonomy" id="100226"/>
    <lineage>
        <taxon>Bacteria</taxon>
        <taxon>Bacillati</taxon>
        <taxon>Actinomycetota</taxon>
        <taxon>Actinomycetes</taxon>
        <taxon>Kitasatosporales</taxon>
        <taxon>Streptomycetaceae</taxon>
        <taxon>Streptomyces</taxon>
        <taxon>Streptomyces albidoflavus group</taxon>
    </lineage>
</organism>
<gene>
    <name evidence="1" type="primary">dapA1</name>
    <name type="ordered locus">SCO1912</name>
    <name type="ORF">SCI7.30</name>
</gene>
<feature type="chain" id="PRO_0000103166" description="4-hydroxy-tetrahydrodipicolinate synthase 1">
    <location>
        <begin position="1"/>
        <end position="305"/>
    </location>
</feature>
<feature type="active site" description="Proton donor/acceptor" evidence="1">
    <location>
        <position position="141"/>
    </location>
</feature>
<feature type="active site" description="Schiff-base intermediate with substrate" evidence="1">
    <location>
        <position position="169"/>
    </location>
</feature>
<feature type="binding site" evidence="1">
    <location>
        <position position="53"/>
    </location>
    <ligand>
        <name>pyruvate</name>
        <dbReference type="ChEBI" id="CHEBI:15361"/>
    </ligand>
</feature>
<feature type="binding site" evidence="1">
    <location>
        <position position="209"/>
    </location>
    <ligand>
        <name>pyruvate</name>
        <dbReference type="ChEBI" id="CHEBI:15361"/>
    </ligand>
</feature>
<feature type="site" description="Part of a proton relay during catalysis" evidence="1">
    <location>
        <position position="52"/>
    </location>
</feature>
<feature type="site" description="Part of a proton relay during catalysis" evidence="1">
    <location>
        <position position="115"/>
    </location>
</feature>
<accession>Q9X9W0</accession>
<reference key="1">
    <citation type="journal article" date="2002" name="Nature">
        <title>Complete genome sequence of the model actinomycete Streptomyces coelicolor A3(2).</title>
        <authorList>
            <person name="Bentley S.D."/>
            <person name="Chater K.F."/>
            <person name="Cerdeno-Tarraga A.-M."/>
            <person name="Challis G.L."/>
            <person name="Thomson N.R."/>
            <person name="James K.D."/>
            <person name="Harris D.E."/>
            <person name="Quail M.A."/>
            <person name="Kieser H."/>
            <person name="Harper D."/>
            <person name="Bateman A."/>
            <person name="Brown S."/>
            <person name="Chandra G."/>
            <person name="Chen C.W."/>
            <person name="Collins M."/>
            <person name="Cronin A."/>
            <person name="Fraser A."/>
            <person name="Goble A."/>
            <person name="Hidalgo J."/>
            <person name="Hornsby T."/>
            <person name="Howarth S."/>
            <person name="Huang C.-H."/>
            <person name="Kieser T."/>
            <person name="Larke L."/>
            <person name="Murphy L.D."/>
            <person name="Oliver K."/>
            <person name="O'Neil S."/>
            <person name="Rabbinowitsch E."/>
            <person name="Rajandream M.A."/>
            <person name="Rutherford K.M."/>
            <person name="Rutter S."/>
            <person name="Seeger K."/>
            <person name="Saunders D."/>
            <person name="Sharp S."/>
            <person name="Squares R."/>
            <person name="Squares S."/>
            <person name="Taylor K."/>
            <person name="Warren T."/>
            <person name="Wietzorrek A."/>
            <person name="Woodward J.R."/>
            <person name="Barrell B.G."/>
            <person name="Parkhill J."/>
            <person name="Hopwood D.A."/>
        </authorList>
    </citation>
    <scope>NUCLEOTIDE SEQUENCE [LARGE SCALE GENOMIC DNA]</scope>
    <source>
        <strain>ATCC BAA-471 / A3(2) / M145</strain>
    </source>
</reference>
<sequence length="305" mass="31261">MTTDDDSAPFGRSLCAMVTPFTGSGALDLDGAQRLADRLVARGCDGLVLSGTTGESPTTTDAEKAALVTAVREAVGDRAALVAGVGTADTRHTVELALAAEKAGADGLLVVAPYYSRPPQDALEAHFREVADASGLPVMLYDIPGRTGTRIEPDTVVRLAAHPRIVAVKDCAYDLLGTQKVLSRTGLAYYAGCDEQILPLYAIGAAGYVSTVANVVPELFRAVLDAFDAGDTGRAALLQRRAVPLVESMMAAGLPGTVTAKALLGALGLPAGPVRAPLRSADRETTAGLLAAYGELAADAGQSQA</sequence>